<reference key="1">
    <citation type="journal article" date="1994" name="Virology">
        <title>Complete genomes, phylogenetic relatedness, and structural proteins of six strains of the hepatitis B virus, four of which represent two new genotypes.</title>
        <authorList>
            <person name="Norder H."/>
            <person name="Courouce A.M."/>
            <person name="Magnius L.O."/>
        </authorList>
    </citation>
    <scope>NUCLEOTIDE SEQUENCE [GENOMIC DNA]</scope>
</reference>
<reference key="2">
    <citation type="journal article" date="2007" name="World J. Gastroenterol.">
        <title>Hepatitis B virus replication.</title>
        <authorList>
            <person name="Beck J."/>
            <person name="Nassal M."/>
        </authorList>
    </citation>
    <scope>REVIEW</scope>
</reference>
<protein>
    <recommendedName>
        <fullName evidence="1">Protein P</fullName>
    </recommendedName>
    <domain>
        <recommendedName>
            <fullName evidence="1">DNA-directed DNA polymerase</fullName>
            <ecNumber evidence="1">2.7.7.7</ecNumber>
        </recommendedName>
    </domain>
    <domain>
        <recommendedName>
            <fullName evidence="1">RNA-directed DNA polymerase</fullName>
            <ecNumber evidence="1">2.7.7.49</ecNumber>
        </recommendedName>
    </domain>
    <domain>
        <recommendedName>
            <fullName evidence="1">Ribonuclease H</fullName>
            <ecNumber evidence="1">3.1.26.4</ecNumber>
        </recommendedName>
    </domain>
</protein>
<organism>
    <name type="scientific">Hepatitis B virus genotype E subtype ayw4 (isolate Kou)</name>
    <name type="common">HBV-E</name>
    <dbReference type="NCBI Taxonomy" id="489495"/>
    <lineage>
        <taxon>Viruses</taxon>
        <taxon>Riboviria</taxon>
        <taxon>Pararnavirae</taxon>
        <taxon>Artverviricota</taxon>
        <taxon>Revtraviricetes</taxon>
        <taxon>Blubervirales</taxon>
        <taxon>Hepadnaviridae</taxon>
        <taxon>Orthohepadnavirus</taxon>
        <taxon>Hepatitis B virus</taxon>
        <taxon>hepatitis B virus genotype E</taxon>
    </lineage>
</organism>
<accession>Q69602</accession>
<proteinExistence type="inferred from homology"/>
<name>DPOL_HBVE1</name>
<comment type="function">
    <text evidence="1">Multifunctional enzyme that converts the viral RNA genome into dsDNA in viral cytoplasmic capsids. This enzyme displays a DNA polymerase activity that can copy either DNA or RNA templates, and a ribonuclease H (RNase H) activity that cleaves the RNA strand of RNA-DNA heteroduplexes in a partially processive 3'- to 5'-endonucleasic mode. Neo-synthesized pregenomic RNA (pgRNA) are encapsidated together with the P protein, and reverse-transcribed inside the nucleocapsid. Initiation of reverse-transcription occurs first by binding the epsilon loop on the pgRNA genome, and is initiated by protein priming, thereby the 5'-end of (-)DNA is covalently linked to P protein. Partial (+)DNA is synthesized from the (-)DNA template and generates the relaxed circular DNA (RC-DNA) genome. After budding and infection, the RC-DNA migrates in the nucleus, and is converted into a plasmid-like covalently closed circular DNA (cccDNA). The activity of P protein does not seem to be necessary for cccDNA generation, and is presumably released from (+)DNA by host nuclear DNA repair machinery.</text>
</comment>
<comment type="catalytic activity">
    <reaction evidence="1">
        <text>DNA(n) + a 2'-deoxyribonucleoside 5'-triphosphate = DNA(n+1) + diphosphate</text>
        <dbReference type="Rhea" id="RHEA:22508"/>
        <dbReference type="Rhea" id="RHEA-COMP:17339"/>
        <dbReference type="Rhea" id="RHEA-COMP:17340"/>
        <dbReference type="ChEBI" id="CHEBI:33019"/>
        <dbReference type="ChEBI" id="CHEBI:61560"/>
        <dbReference type="ChEBI" id="CHEBI:173112"/>
        <dbReference type="EC" id="2.7.7.7"/>
    </reaction>
</comment>
<comment type="catalytic activity">
    <reaction evidence="1">
        <text>DNA(n) + a 2'-deoxyribonucleoside 5'-triphosphate = DNA(n+1) + diphosphate</text>
        <dbReference type="Rhea" id="RHEA:22508"/>
        <dbReference type="Rhea" id="RHEA-COMP:17339"/>
        <dbReference type="Rhea" id="RHEA-COMP:17340"/>
        <dbReference type="ChEBI" id="CHEBI:33019"/>
        <dbReference type="ChEBI" id="CHEBI:61560"/>
        <dbReference type="ChEBI" id="CHEBI:173112"/>
        <dbReference type="EC" id="2.7.7.49"/>
    </reaction>
</comment>
<comment type="catalytic activity">
    <reaction evidence="1">
        <text>Endonucleolytic cleavage to 5'-phosphomonoester.</text>
        <dbReference type="EC" id="3.1.26.4"/>
    </reaction>
</comment>
<comment type="activity regulation">
    <text evidence="1">Activated by host HSP70 and HSP40 in vitro to be able to bind the epsilon loop of the pgRNA. Because deletion of the RNase H region renders the protein partly chaperone-independent, the chaperones may be needed indirectly to relieve occlusion of the RNA-binding site by this domain. Inhibited by several reverse-transcriptase inhibitors: Lamivudine, Adefovir and Entecavir.</text>
</comment>
<comment type="domain">
    <text evidence="1">Terminal protein domain (TP) is hepadnavirus-specific. Spacer domain is highly variable and separates the TP and RT domains. Polymerase/reverse-transcriptase domain (RT) and ribonuclease H domain (RH) are similar to retrovirus reverse transcriptase/RNase H.</text>
</comment>
<comment type="domain">
    <text evidence="1">The polymerase/reverse transcriptase (RT) and ribonuclease H (RH) domains are structured in five subdomains: finger, palm, thumb, connection and RNase H. Within the palm subdomain, the 'primer grip' region is thought to be involved in the positioning of the primer terminus for accommodating the incoming nucleotide. The RH domain stabilizes the association of RT with primer-template.</text>
</comment>
<comment type="miscellaneous">
    <text evidence="1">Hepadnaviral virions contain probably just one P protein molecule per particle.</text>
</comment>
<comment type="similarity">
    <text evidence="1">Belongs to the hepadnaviridae P protein family.</text>
</comment>
<keyword id="KW-0235">DNA replication</keyword>
<keyword id="KW-0238">DNA-binding</keyword>
<keyword id="KW-0239">DNA-directed DNA polymerase</keyword>
<keyword id="KW-0255">Endonuclease</keyword>
<keyword id="KW-0945">Host-virus interaction</keyword>
<keyword id="KW-0378">Hydrolase</keyword>
<keyword id="KW-1090">Inhibition of host innate immune response by virus</keyword>
<keyword id="KW-1113">Inhibition of host RLR pathway by virus</keyword>
<keyword id="KW-0460">Magnesium</keyword>
<keyword id="KW-0479">Metal-binding</keyword>
<keyword id="KW-0511">Multifunctional enzyme</keyword>
<keyword id="KW-0540">Nuclease</keyword>
<keyword id="KW-0548">Nucleotidyltransferase</keyword>
<keyword id="KW-0695">RNA-directed DNA polymerase</keyword>
<keyword id="KW-0808">Transferase</keyword>
<keyword id="KW-0899">Viral immunoevasion</keyword>
<organismHost>
    <name type="scientific">Homo sapiens</name>
    <name type="common">Human</name>
    <dbReference type="NCBI Taxonomy" id="9606"/>
</organismHost>
<organismHost>
    <name type="scientific">Pan troglodytes</name>
    <name type="common">Chimpanzee</name>
    <dbReference type="NCBI Taxonomy" id="9598"/>
</organismHost>
<feature type="chain" id="PRO_0000323270" description="Protein P">
    <location>
        <begin position="1"/>
        <end position="842"/>
    </location>
</feature>
<feature type="domain" description="Reverse transcriptase" evidence="1">
    <location>
        <begin position="356"/>
        <end position="599"/>
    </location>
</feature>
<feature type="region of interest" description="Terminal protein domain (TP)" evidence="1">
    <location>
        <begin position="1"/>
        <end position="177"/>
    </location>
</feature>
<feature type="region of interest" description="Spacer" evidence="1">
    <location>
        <begin position="178"/>
        <end position="345"/>
    </location>
</feature>
<feature type="region of interest" description="Disordered" evidence="2">
    <location>
        <begin position="205"/>
        <end position="271"/>
    </location>
</feature>
<feature type="region of interest" description="Polymerase/reverse transcriptase domain (RT)" evidence="1">
    <location>
        <begin position="346"/>
        <end position="689"/>
    </location>
</feature>
<feature type="compositionally biased region" description="Polar residues" evidence="2">
    <location>
        <begin position="223"/>
        <end position="239"/>
    </location>
</feature>
<feature type="binding site" evidence="1">
    <location>
        <position position="428"/>
    </location>
    <ligand>
        <name>Mg(2+)</name>
        <dbReference type="ChEBI" id="CHEBI:18420"/>
        <note>catalytic</note>
    </ligand>
</feature>
<feature type="binding site" evidence="1">
    <location>
        <position position="550"/>
    </location>
    <ligand>
        <name>Mg(2+)</name>
        <dbReference type="ChEBI" id="CHEBI:18420"/>
        <note>catalytic</note>
    </ligand>
</feature>
<feature type="binding site" evidence="1">
    <location>
        <position position="551"/>
    </location>
    <ligand>
        <name>Mg(2+)</name>
        <dbReference type="ChEBI" id="CHEBI:18420"/>
        <note>catalytic</note>
    </ligand>
</feature>
<feature type="site" description="Priming of reverse-transcription by covalently linking the first nucleotide of the (-)DNA" evidence="1">
    <location>
        <position position="63"/>
    </location>
</feature>
<sequence length="842" mass="94519">MPLSYQHFRRILLLDEEAGPLEEELPRLADEDLNRRVAEDLNLQLPNVSIPWTHKVGNFTGLYSSTIPVFNPNWKTPSFPDIHLHQDIINKCEQFVGPLTVNEKRRLNLVMPARFFPISTKYLPLEKGIKPYYPDNVVNHYFQTRHYLHTLWKAGHLYKRETTRSASFCGSPYSWEQELHHGAFLDGPSRMGEEYFHHQSSGIFSRPPVGSSIQSKHQKSRLGPQSQQRPLDGSQQGRSGSLRAGVHSPTRRPFGVEPSGSRHAKNIASRPASCLHQSAVRKAAYPNHSTFERHSSSGHAVELHNISSSSAGSQSKRPVFSCWWLQFRNSEPCSDYCLTHLVNLLEDWGPCTEHGKHHIRIPRTPARVTGGVFLVDKNPHNTAESRLVVDFSQFSRGSSRVSWPKFAVPNLQSLTNLLSSNLSWLSLDVSAAFYHLPLHPAAMPHLLVGSSGLSRYVARLSSNSRIINHQHGTLPNLHDSCSRNLYVSLMLLFKTFGRKLHLYSHPIIMGFRKIPMGVGLSPFLLAQFTSAICSVVRRAFPHCLAFSYMDDVVLGAKSVRHLESLYTSVTNFLLSLGIHLNPNKTKRWGYSLNFMGYVIGSWGSLPQEHIIQKIKHCFGKLPVNRPIDWKVCQGIVGLLGFAAPFTQCGYPALMPLYTCIQSKQAFTFSPTYKAFLCKQYLNLYPVARQRPGLCQVFADATPTGWGLAIGIQRMRGTFVAPLPIHTAELLAACFARSRSGAKLIGTDNSVVLSRKYTSFPWLLGCAANWILRGTSFVYVPSALNPADDPSRGRLGIFRPLLRLRFRPTTGRTSLYAVSPSVPSHLPDRVHFASPLHVAWRPP</sequence>
<dbReference type="EC" id="2.7.7.7" evidence="1"/>
<dbReference type="EC" id="2.7.7.49" evidence="1"/>
<dbReference type="EC" id="3.1.26.4" evidence="1"/>
<dbReference type="EMBL" id="X75664">
    <property type="protein sequence ID" value="CAA53354.1"/>
    <property type="molecule type" value="Genomic_DNA"/>
</dbReference>
<dbReference type="Proteomes" id="UP000008538">
    <property type="component" value="Genome"/>
</dbReference>
<dbReference type="GO" id="GO:0003677">
    <property type="term" value="F:DNA binding"/>
    <property type="evidence" value="ECO:0007669"/>
    <property type="project" value="UniProtKB-UniRule"/>
</dbReference>
<dbReference type="GO" id="GO:0003887">
    <property type="term" value="F:DNA-directed DNA polymerase activity"/>
    <property type="evidence" value="ECO:0007669"/>
    <property type="project" value="UniProtKB-UniRule"/>
</dbReference>
<dbReference type="GO" id="GO:0046872">
    <property type="term" value="F:metal ion binding"/>
    <property type="evidence" value="ECO:0007669"/>
    <property type="project" value="UniProtKB-UniRule"/>
</dbReference>
<dbReference type="GO" id="GO:0003964">
    <property type="term" value="F:RNA-directed DNA polymerase activity"/>
    <property type="evidence" value="ECO:0007669"/>
    <property type="project" value="UniProtKB-UniRule"/>
</dbReference>
<dbReference type="GO" id="GO:0004523">
    <property type="term" value="F:RNA-DNA hybrid ribonuclease activity"/>
    <property type="evidence" value="ECO:0007669"/>
    <property type="project" value="UniProtKB-UniRule"/>
</dbReference>
<dbReference type="GO" id="GO:0006260">
    <property type="term" value="P:DNA replication"/>
    <property type="evidence" value="ECO:0007669"/>
    <property type="project" value="UniProtKB-UniRule"/>
</dbReference>
<dbReference type="GO" id="GO:0052170">
    <property type="term" value="P:symbiont-mediated suppression of host innate immune response"/>
    <property type="evidence" value="ECO:0007669"/>
    <property type="project" value="UniProtKB-UniRule"/>
</dbReference>
<dbReference type="FunFam" id="3.30.70.270:FF:000009">
    <property type="entry name" value="Protein P"/>
    <property type="match status" value="1"/>
</dbReference>
<dbReference type="Gene3D" id="3.30.70.270">
    <property type="match status" value="1"/>
</dbReference>
<dbReference type="HAMAP" id="MF_04073">
    <property type="entry name" value="HBV_DPOL"/>
    <property type="match status" value="1"/>
</dbReference>
<dbReference type="InterPro" id="IPR043502">
    <property type="entry name" value="DNA/RNA_pol_sf"/>
</dbReference>
<dbReference type="InterPro" id="IPR001462">
    <property type="entry name" value="DNApol_viral_C"/>
</dbReference>
<dbReference type="InterPro" id="IPR000201">
    <property type="entry name" value="DNApol_viral_N"/>
</dbReference>
<dbReference type="InterPro" id="IPR037531">
    <property type="entry name" value="HBV_DPOL"/>
</dbReference>
<dbReference type="InterPro" id="IPR043128">
    <property type="entry name" value="Rev_trsase/Diguanyl_cyclase"/>
</dbReference>
<dbReference type="InterPro" id="IPR000477">
    <property type="entry name" value="RT_dom"/>
</dbReference>
<dbReference type="InterPro" id="IPR051320">
    <property type="entry name" value="Viral_Replic_Matur_Polypro"/>
</dbReference>
<dbReference type="PANTHER" id="PTHR33064:SF29">
    <property type="entry name" value="PEPTIDASE A2 DOMAIN-CONTAINING PROTEIN-RELATED"/>
    <property type="match status" value="1"/>
</dbReference>
<dbReference type="PANTHER" id="PTHR33064">
    <property type="entry name" value="POL PROTEIN"/>
    <property type="match status" value="1"/>
</dbReference>
<dbReference type="Pfam" id="PF00336">
    <property type="entry name" value="DNA_pol_viral_C"/>
    <property type="match status" value="1"/>
</dbReference>
<dbReference type="Pfam" id="PF00242">
    <property type="entry name" value="DNA_pol_viral_N"/>
    <property type="match status" value="1"/>
</dbReference>
<dbReference type="Pfam" id="PF00078">
    <property type="entry name" value="RVT_1"/>
    <property type="match status" value="1"/>
</dbReference>
<dbReference type="SUPFAM" id="SSF56672">
    <property type="entry name" value="DNA/RNA polymerases"/>
    <property type="match status" value="1"/>
</dbReference>
<dbReference type="PROSITE" id="PS50878">
    <property type="entry name" value="RT_POL"/>
    <property type="match status" value="1"/>
</dbReference>
<evidence type="ECO:0000255" key="1">
    <source>
        <dbReference type="HAMAP-Rule" id="MF_04073"/>
    </source>
</evidence>
<evidence type="ECO:0000256" key="2">
    <source>
        <dbReference type="SAM" id="MobiDB-lite"/>
    </source>
</evidence>
<gene>
    <name evidence="1" type="primary">P</name>
</gene>